<reference key="1">
    <citation type="journal article" date="2001" name="Genetics">
        <title>Cell polarity and hyphal morphogenesis are controlled by multiple rho-protein modules in the filamentous ascomycete Ashbya gossypii.</title>
        <authorList>
            <person name="Wendland J."/>
            <person name="Philippsen P."/>
        </authorList>
    </citation>
    <scope>NUCLEOTIDE SEQUENCE [GENOMIC DNA]</scope>
    <scope>FUNCTION</scope>
</reference>
<reference key="2">
    <citation type="journal article" date="2004" name="Science">
        <title>The Ashbya gossypii genome as a tool for mapping the ancient Saccharomyces cerevisiae genome.</title>
        <authorList>
            <person name="Dietrich F.S."/>
            <person name="Voegeli S."/>
            <person name="Brachat S."/>
            <person name="Lerch A."/>
            <person name="Gates K."/>
            <person name="Steiner S."/>
            <person name="Mohr C."/>
            <person name="Poehlmann R."/>
            <person name="Luedi P."/>
            <person name="Choi S."/>
            <person name="Wing R.A."/>
            <person name="Flavier A."/>
            <person name="Gaffney T.D."/>
            <person name="Philippsen P."/>
        </authorList>
    </citation>
    <scope>NUCLEOTIDE SEQUENCE [LARGE SCALE GENOMIC DNA]</scope>
    <source>
        <strain>ATCC 10895 / CBS 109.51 / FGSC 9923 / NRRL Y-1056</strain>
    </source>
</reference>
<reference key="3">
    <citation type="journal article" date="2013" name="G3 (Bethesda)">
        <title>Genomes of Ashbya fungi isolated from insects reveal four mating-type loci, numerous translocations, lack of transposons, and distinct gene duplications.</title>
        <authorList>
            <person name="Dietrich F.S."/>
            <person name="Voegeli S."/>
            <person name="Kuo S."/>
            <person name="Philippsen P."/>
        </authorList>
    </citation>
    <scope>GENOME REANNOTATION</scope>
    <source>
        <strain>ATCC 10895 / CBS 109.51 / FGSC 9923 / NRRL Y-1056</strain>
    </source>
</reference>
<sequence>MQTLKCVVVGDGAVGKTCLLISYTTNQFPADYVPTVFDNYAVTVMIGDEPYTLGLFDTAGQEDYDRLRPLSYPSTDVFLVCFSVVSPPSFENVKEKWFPEVHHHCPGVPCLIVGTQIDLRENKMVIEKLQRQRLRPITPEQGEKFARELRAVKYVECSALTQRGLKNVFDEAIVAALEPPVIKKSKKCTIL</sequence>
<keyword id="KW-0131">Cell cycle</keyword>
<keyword id="KW-0132">Cell division</keyword>
<keyword id="KW-1003">Cell membrane</keyword>
<keyword id="KW-0342">GTP-binding</keyword>
<keyword id="KW-0449">Lipoprotein</keyword>
<keyword id="KW-0472">Membrane</keyword>
<keyword id="KW-0488">Methylation</keyword>
<keyword id="KW-0547">Nucleotide-binding</keyword>
<keyword id="KW-0636">Prenylation</keyword>
<keyword id="KW-1185">Reference proteome</keyword>
<accession>Q9HF56</accession>
<comment type="function">
    <text evidence="2">Involved in development of cell polarity during the cell division cycle. Required for the establishment of actin polarization in germ cells.</text>
</comment>
<comment type="subcellular location">
    <subcellularLocation>
        <location evidence="3">Cell membrane</location>
        <topology evidence="3">Lipid-anchor</topology>
        <orientation evidence="3">Cytoplasmic side</orientation>
    </subcellularLocation>
</comment>
<comment type="similarity">
    <text evidence="3">Belongs to the small GTPase superfamily. Rho family. CDC42 subfamily.</text>
</comment>
<organism>
    <name type="scientific">Eremothecium gossypii (strain ATCC 10895 / CBS 109.51 / FGSC 9923 / NRRL Y-1056)</name>
    <name type="common">Yeast</name>
    <name type="synonym">Ashbya gossypii</name>
    <dbReference type="NCBI Taxonomy" id="284811"/>
    <lineage>
        <taxon>Eukaryota</taxon>
        <taxon>Fungi</taxon>
        <taxon>Dikarya</taxon>
        <taxon>Ascomycota</taxon>
        <taxon>Saccharomycotina</taxon>
        <taxon>Saccharomycetes</taxon>
        <taxon>Saccharomycetales</taxon>
        <taxon>Saccharomycetaceae</taxon>
        <taxon>Eremothecium</taxon>
    </lineage>
</organism>
<name>CDC42_EREGS</name>
<evidence type="ECO:0000250" key="1"/>
<evidence type="ECO:0000269" key="2">
    <source>
    </source>
</evidence>
<evidence type="ECO:0000305" key="3"/>
<proteinExistence type="inferred from homology"/>
<feature type="chain" id="PRO_0000198951" description="Cell division control protein 42">
    <location>
        <begin position="1"/>
        <end position="188"/>
    </location>
</feature>
<feature type="propeptide" id="PRO_0000281281" description="Removed in mature form" evidence="1">
    <location>
        <begin position="189"/>
        <end position="191"/>
    </location>
</feature>
<feature type="short sequence motif" description="Effector region" evidence="1">
    <location>
        <begin position="32"/>
        <end position="40"/>
    </location>
</feature>
<feature type="binding site" evidence="1">
    <location>
        <begin position="10"/>
        <end position="17"/>
    </location>
    <ligand>
        <name>GTP</name>
        <dbReference type="ChEBI" id="CHEBI:37565"/>
    </ligand>
</feature>
<feature type="binding site" evidence="1">
    <location>
        <begin position="57"/>
        <end position="61"/>
    </location>
    <ligand>
        <name>GTP</name>
        <dbReference type="ChEBI" id="CHEBI:37565"/>
    </ligand>
</feature>
<feature type="binding site" evidence="1">
    <location>
        <begin position="115"/>
        <end position="118"/>
    </location>
    <ligand>
        <name>GTP</name>
        <dbReference type="ChEBI" id="CHEBI:37565"/>
    </ligand>
</feature>
<feature type="modified residue" description="Cysteine methyl ester" evidence="1">
    <location>
        <position position="188"/>
    </location>
</feature>
<feature type="lipid moiety-binding region" description="S-geranylgeranyl cysteine" evidence="1">
    <location>
        <position position="188"/>
    </location>
</feature>
<gene>
    <name type="primary">CDC42</name>
    <name type="ordered locus">AGL093W</name>
</gene>
<protein>
    <recommendedName>
        <fullName>Cell division control protein 42</fullName>
    </recommendedName>
</protein>
<dbReference type="EMBL" id="AF210627">
    <property type="protein sequence ID" value="AAG41247.1"/>
    <property type="molecule type" value="Genomic_DNA"/>
</dbReference>
<dbReference type="EMBL" id="AE016820">
    <property type="protein sequence ID" value="AAS54397.1"/>
    <property type="molecule type" value="Genomic_DNA"/>
</dbReference>
<dbReference type="RefSeq" id="NP_986573.1">
    <property type="nucleotide sequence ID" value="NM_211635.1"/>
</dbReference>
<dbReference type="SMR" id="Q9HF56"/>
<dbReference type="FunCoup" id="Q9HF56">
    <property type="interactions" value="986"/>
</dbReference>
<dbReference type="STRING" id="284811.Q9HF56"/>
<dbReference type="EnsemblFungi" id="AAS54397">
    <property type="protein sequence ID" value="AAS54397"/>
    <property type="gene ID" value="AGOS_AGL093W"/>
</dbReference>
<dbReference type="GeneID" id="4622872"/>
<dbReference type="KEGG" id="ago:AGOS_AGL093W"/>
<dbReference type="eggNOG" id="KOG0393">
    <property type="taxonomic scope" value="Eukaryota"/>
</dbReference>
<dbReference type="HOGENOM" id="CLU_041217_21_3_1"/>
<dbReference type="InParanoid" id="Q9HF56"/>
<dbReference type="OMA" id="GDEPYTF"/>
<dbReference type="OrthoDB" id="8830751at2759"/>
<dbReference type="Proteomes" id="UP000000591">
    <property type="component" value="Chromosome VII"/>
</dbReference>
<dbReference type="GO" id="GO:0005935">
    <property type="term" value="C:cellular bud neck"/>
    <property type="evidence" value="ECO:0007669"/>
    <property type="project" value="EnsemblFungi"/>
</dbReference>
<dbReference type="GO" id="GO:0005934">
    <property type="term" value="C:cellular bud tip"/>
    <property type="evidence" value="ECO:0007669"/>
    <property type="project" value="EnsemblFungi"/>
</dbReference>
<dbReference type="GO" id="GO:0000329">
    <property type="term" value="C:fungal-type vacuole membrane"/>
    <property type="evidence" value="ECO:0007669"/>
    <property type="project" value="EnsemblFungi"/>
</dbReference>
<dbReference type="GO" id="GO:0000131">
    <property type="term" value="C:incipient cellular bud site"/>
    <property type="evidence" value="ECO:0007669"/>
    <property type="project" value="EnsemblFungi"/>
</dbReference>
<dbReference type="GO" id="GO:0043332">
    <property type="term" value="C:mating projection tip"/>
    <property type="evidence" value="ECO:0007669"/>
    <property type="project" value="EnsemblFungi"/>
</dbReference>
<dbReference type="GO" id="GO:0031965">
    <property type="term" value="C:nuclear membrane"/>
    <property type="evidence" value="ECO:0007669"/>
    <property type="project" value="EnsemblFungi"/>
</dbReference>
<dbReference type="GO" id="GO:0005886">
    <property type="term" value="C:plasma membrane"/>
    <property type="evidence" value="ECO:0000318"/>
    <property type="project" value="GO_Central"/>
</dbReference>
<dbReference type="GO" id="GO:0005940">
    <property type="term" value="C:septin ring"/>
    <property type="evidence" value="ECO:0007669"/>
    <property type="project" value="EnsemblFungi"/>
</dbReference>
<dbReference type="GO" id="GO:0005525">
    <property type="term" value="F:GTP binding"/>
    <property type="evidence" value="ECO:0000318"/>
    <property type="project" value="GO_Central"/>
</dbReference>
<dbReference type="GO" id="GO:0003924">
    <property type="term" value="F:GTPase activity"/>
    <property type="evidence" value="ECO:0000318"/>
    <property type="project" value="GO_Central"/>
</dbReference>
<dbReference type="GO" id="GO:0019901">
    <property type="term" value="F:protein kinase binding"/>
    <property type="evidence" value="ECO:0000318"/>
    <property type="project" value="GO_Central"/>
</dbReference>
<dbReference type="GO" id="GO:0007015">
    <property type="term" value="P:actin filament organization"/>
    <property type="evidence" value="ECO:0000318"/>
    <property type="project" value="GO_Central"/>
</dbReference>
<dbReference type="GO" id="GO:0007118">
    <property type="term" value="P:budding cell apical bud growth"/>
    <property type="evidence" value="ECO:0007669"/>
    <property type="project" value="EnsemblFungi"/>
</dbReference>
<dbReference type="GO" id="GO:0007119">
    <property type="term" value="P:budding cell isotropic bud growth"/>
    <property type="evidence" value="ECO:0007669"/>
    <property type="project" value="EnsemblFungi"/>
</dbReference>
<dbReference type="GO" id="GO:0000747">
    <property type="term" value="P:conjugation with cellular fusion"/>
    <property type="evidence" value="ECO:0007669"/>
    <property type="project" value="EnsemblFungi"/>
</dbReference>
<dbReference type="GO" id="GO:0006897">
    <property type="term" value="P:endocytosis"/>
    <property type="evidence" value="ECO:0000318"/>
    <property type="project" value="GO_Central"/>
</dbReference>
<dbReference type="GO" id="GO:0030010">
    <property type="term" value="P:establishment of cell polarity"/>
    <property type="evidence" value="ECO:0000318"/>
    <property type="project" value="GO_Central"/>
</dbReference>
<dbReference type="GO" id="GO:0001403">
    <property type="term" value="P:invasive growth in response to glucose limitation"/>
    <property type="evidence" value="ECO:0007669"/>
    <property type="project" value="EnsemblFungi"/>
</dbReference>
<dbReference type="GO" id="GO:0071763">
    <property type="term" value="P:nuclear membrane organization"/>
    <property type="evidence" value="ECO:0007669"/>
    <property type="project" value="EnsemblFungi"/>
</dbReference>
<dbReference type="GO" id="GO:0000750">
    <property type="term" value="P:pheromone-dependent signal transduction involved in conjugation with cellular fusion"/>
    <property type="evidence" value="ECO:0007669"/>
    <property type="project" value="EnsemblFungi"/>
</dbReference>
<dbReference type="GO" id="GO:0045921">
    <property type="term" value="P:positive regulation of exocytosis"/>
    <property type="evidence" value="ECO:0007669"/>
    <property type="project" value="EnsemblFungi"/>
</dbReference>
<dbReference type="GO" id="GO:2000222">
    <property type="term" value="P:positive regulation of pseudohyphal growth"/>
    <property type="evidence" value="ECO:0007669"/>
    <property type="project" value="EnsemblFungi"/>
</dbReference>
<dbReference type="GO" id="GO:0022604">
    <property type="term" value="P:regulation of cell morphogenesis"/>
    <property type="evidence" value="ECO:0007669"/>
    <property type="project" value="EnsemblFungi"/>
</dbReference>
<dbReference type="GO" id="GO:0007096">
    <property type="term" value="P:regulation of exit from mitosis"/>
    <property type="evidence" value="ECO:0007669"/>
    <property type="project" value="EnsemblFungi"/>
</dbReference>
<dbReference type="GO" id="GO:0060178">
    <property type="term" value="P:regulation of exocyst localization"/>
    <property type="evidence" value="ECO:0007669"/>
    <property type="project" value="EnsemblFungi"/>
</dbReference>
<dbReference type="GO" id="GO:0032889">
    <property type="term" value="P:regulation of vacuole fusion, non-autophagic"/>
    <property type="evidence" value="ECO:0007669"/>
    <property type="project" value="EnsemblFungi"/>
</dbReference>
<dbReference type="GO" id="GO:0007266">
    <property type="term" value="P:Rho protein signal transduction"/>
    <property type="evidence" value="ECO:0007669"/>
    <property type="project" value="EnsemblFungi"/>
</dbReference>
<dbReference type="GO" id="GO:0031106">
    <property type="term" value="P:septin ring organization"/>
    <property type="evidence" value="ECO:0007669"/>
    <property type="project" value="EnsemblFungi"/>
</dbReference>
<dbReference type="GO" id="GO:0007165">
    <property type="term" value="P:signal transduction"/>
    <property type="evidence" value="ECO:0000318"/>
    <property type="project" value="GO_Central"/>
</dbReference>
<dbReference type="CDD" id="cd01874">
    <property type="entry name" value="Cdc42"/>
    <property type="match status" value="1"/>
</dbReference>
<dbReference type="FunFam" id="3.40.50.300:FF:000236">
    <property type="entry name" value="Cell division control protein 42"/>
    <property type="match status" value="1"/>
</dbReference>
<dbReference type="Gene3D" id="3.40.50.300">
    <property type="entry name" value="P-loop containing nucleotide triphosphate hydrolases"/>
    <property type="match status" value="1"/>
</dbReference>
<dbReference type="InterPro" id="IPR037874">
    <property type="entry name" value="Cdc42"/>
</dbReference>
<dbReference type="InterPro" id="IPR027417">
    <property type="entry name" value="P-loop_NTPase"/>
</dbReference>
<dbReference type="InterPro" id="IPR005225">
    <property type="entry name" value="Small_GTP-bd"/>
</dbReference>
<dbReference type="InterPro" id="IPR001806">
    <property type="entry name" value="Small_GTPase"/>
</dbReference>
<dbReference type="InterPro" id="IPR003578">
    <property type="entry name" value="Small_GTPase_Rho"/>
</dbReference>
<dbReference type="NCBIfam" id="TIGR00231">
    <property type="entry name" value="small_GTP"/>
    <property type="match status" value="1"/>
</dbReference>
<dbReference type="PANTHER" id="PTHR24072">
    <property type="entry name" value="RHO FAMILY GTPASE"/>
    <property type="match status" value="1"/>
</dbReference>
<dbReference type="Pfam" id="PF00071">
    <property type="entry name" value="Ras"/>
    <property type="match status" value="1"/>
</dbReference>
<dbReference type="PRINTS" id="PR00449">
    <property type="entry name" value="RASTRNSFRMNG"/>
</dbReference>
<dbReference type="SMART" id="SM00175">
    <property type="entry name" value="RAB"/>
    <property type="match status" value="1"/>
</dbReference>
<dbReference type="SMART" id="SM00173">
    <property type="entry name" value="RAS"/>
    <property type="match status" value="1"/>
</dbReference>
<dbReference type="SMART" id="SM00174">
    <property type="entry name" value="RHO"/>
    <property type="match status" value="1"/>
</dbReference>
<dbReference type="SUPFAM" id="SSF52540">
    <property type="entry name" value="P-loop containing nucleoside triphosphate hydrolases"/>
    <property type="match status" value="1"/>
</dbReference>
<dbReference type="PROSITE" id="PS51420">
    <property type="entry name" value="RHO"/>
    <property type="match status" value="1"/>
</dbReference>